<comment type="function">
    <text evidence="1">This protein binds to 23S rRNA in the presence of protein L20.</text>
</comment>
<comment type="subunit">
    <text evidence="1">Part of the 50S ribosomal subunit. Contacts protein L20.</text>
</comment>
<comment type="similarity">
    <text evidence="1">Belongs to the bacterial ribosomal protein bL21 family.</text>
</comment>
<evidence type="ECO:0000255" key="1">
    <source>
        <dbReference type="HAMAP-Rule" id="MF_01363"/>
    </source>
</evidence>
<evidence type="ECO:0000256" key="2">
    <source>
        <dbReference type="SAM" id="MobiDB-lite"/>
    </source>
</evidence>
<evidence type="ECO:0000305" key="3"/>
<dbReference type="EMBL" id="CP000301">
    <property type="protein sequence ID" value="ABD85728.1"/>
    <property type="molecule type" value="Genomic_DNA"/>
</dbReference>
<dbReference type="SMR" id="Q21D08"/>
<dbReference type="STRING" id="316056.RPC_0153"/>
<dbReference type="KEGG" id="rpc:RPC_0153"/>
<dbReference type="eggNOG" id="COG0261">
    <property type="taxonomic scope" value="Bacteria"/>
</dbReference>
<dbReference type="HOGENOM" id="CLU_061463_1_2_5"/>
<dbReference type="OrthoDB" id="9813334at2"/>
<dbReference type="GO" id="GO:0005737">
    <property type="term" value="C:cytoplasm"/>
    <property type="evidence" value="ECO:0007669"/>
    <property type="project" value="UniProtKB-ARBA"/>
</dbReference>
<dbReference type="GO" id="GO:1990904">
    <property type="term" value="C:ribonucleoprotein complex"/>
    <property type="evidence" value="ECO:0007669"/>
    <property type="project" value="UniProtKB-KW"/>
</dbReference>
<dbReference type="GO" id="GO:0005840">
    <property type="term" value="C:ribosome"/>
    <property type="evidence" value="ECO:0007669"/>
    <property type="project" value="UniProtKB-KW"/>
</dbReference>
<dbReference type="GO" id="GO:0019843">
    <property type="term" value="F:rRNA binding"/>
    <property type="evidence" value="ECO:0007669"/>
    <property type="project" value="UniProtKB-UniRule"/>
</dbReference>
<dbReference type="GO" id="GO:0003735">
    <property type="term" value="F:structural constituent of ribosome"/>
    <property type="evidence" value="ECO:0007669"/>
    <property type="project" value="InterPro"/>
</dbReference>
<dbReference type="GO" id="GO:0006412">
    <property type="term" value="P:translation"/>
    <property type="evidence" value="ECO:0007669"/>
    <property type="project" value="UniProtKB-UniRule"/>
</dbReference>
<dbReference type="HAMAP" id="MF_01363">
    <property type="entry name" value="Ribosomal_bL21"/>
    <property type="match status" value="1"/>
</dbReference>
<dbReference type="InterPro" id="IPR028909">
    <property type="entry name" value="bL21-like"/>
</dbReference>
<dbReference type="InterPro" id="IPR036164">
    <property type="entry name" value="bL21-like_sf"/>
</dbReference>
<dbReference type="InterPro" id="IPR001787">
    <property type="entry name" value="Ribosomal_bL21"/>
</dbReference>
<dbReference type="NCBIfam" id="TIGR00061">
    <property type="entry name" value="L21"/>
    <property type="match status" value="1"/>
</dbReference>
<dbReference type="PANTHER" id="PTHR21349">
    <property type="entry name" value="50S RIBOSOMAL PROTEIN L21"/>
    <property type="match status" value="1"/>
</dbReference>
<dbReference type="PANTHER" id="PTHR21349:SF0">
    <property type="entry name" value="LARGE RIBOSOMAL SUBUNIT PROTEIN BL21M"/>
    <property type="match status" value="1"/>
</dbReference>
<dbReference type="Pfam" id="PF00829">
    <property type="entry name" value="Ribosomal_L21p"/>
    <property type="match status" value="1"/>
</dbReference>
<dbReference type="SUPFAM" id="SSF141091">
    <property type="entry name" value="L21p-like"/>
    <property type="match status" value="1"/>
</dbReference>
<feature type="chain" id="PRO_0000270724" description="Large ribosomal subunit protein bL21">
    <location>
        <begin position="1"/>
        <end position="132"/>
    </location>
</feature>
<feature type="region of interest" description="Disordered" evidence="2">
    <location>
        <begin position="104"/>
        <end position="132"/>
    </location>
</feature>
<keyword id="KW-0687">Ribonucleoprotein</keyword>
<keyword id="KW-0689">Ribosomal protein</keyword>
<keyword id="KW-0694">RNA-binding</keyword>
<keyword id="KW-0699">rRNA-binding</keyword>
<name>RL21_RHOPB</name>
<reference key="1">
    <citation type="submission" date="2006-03" db="EMBL/GenBank/DDBJ databases">
        <title>Complete sequence of Rhodopseudomonas palustris BisB18.</title>
        <authorList>
            <consortium name="US DOE Joint Genome Institute"/>
            <person name="Copeland A."/>
            <person name="Lucas S."/>
            <person name="Lapidus A."/>
            <person name="Barry K."/>
            <person name="Detter J.C."/>
            <person name="Glavina del Rio T."/>
            <person name="Hammon N."/>
            <person name="Israni S."/>
            <person name="Dalin E."/>
            <person name="Tice H."/>
            <person name="Pitluck S."/>
            <person name="Chain P."/>
            <person name="Malfatti S."/>
            <person name="Shin M."/>
            <person name="Vergez L."/>
            <person name="Schmutz J."/>
            <person name="Larimer F."/>
            <person name="Land M."/>
            <person name="Hauser L."/>
            <person name="Pelletier D.A."/>
            <person name="Kyrpides N."/>
            <person name="Anderson I."/>
            <person name="Oda Y."/>
            <person name="Harwood C.S."/>
            <person name="Richardson P."/>
        </authorList>
    </citation>
    <scope>NUCLEOTIDE SEQUENCE [LARGE SCALE GENOMIC DNA]</scope>
    <source>
        <strain>BisB18</strain>
    </source>
</reference>
<gene>
    <name evidence="1" type="primary">rplU</name>
    <name type="ordered locus">RPC_0153</name>
</gene>
<protein>
    <recommendedName>
        <fullName evidence="1">Large ribosomal subunit protein bL21</fullName>
    </recommendedName>
    <alternativeName>
        <fullName evidence="3">50S ribosomal protein L21</fullName>
    </alternativeName>
</protein>
<organism>
    <name type="scientific">Rhodopseudomonas palustris (strain BisB18)</name>
    <dbReference type="NCBI Taxonomy" id="316056"/>
    <lineage>
        <taxon>Bacteria</taxon>
        <taxon>Pseudomonadati</taxon>
        <taxon>Pseudomonadota</taxon>
        <taxon>Alphaproteobacteria</taxon>
        <taxon>Hyphomicrobiales</taxon>
        <taxon>Nitrobacteraceae</taxon>
        <taxon>Rhodopseudomonas</taxon>
    </lineage>
</organism>
<sequence>MFAVIKTGGRQYRVVPDDVLEIGKIAGDVGTIIQLGEVLMLGGDTPVLGLPTVAGATVAAEVLQHKRGPKVISFKKRRRKNSKRKRGYRDEITVLRITEILADGKAPSIGPRPPREKKPVVETSAEADDAAA</sequence>
<proteinExistence type="inferred from homology"/>
<accession>Q21D08</accession>